<feature type="chain" id="PRO_0000381830" description="Protein N-terminal glutamine amidohydrolase">
    <location>
        <begin position="1"/>
        <end position="205"/>
    </location>
</feature>
<feature type="active site" evidence="1">
    <location>
        <position position="20"/>
    </location>
</feature>
<feature type="active site" evidence="1">
    <location>
        <position position="74"/>
    </location>
</feature>
<feature type="active site" evidence="1">
    <location>
        <position position="90"/>
    </location>
</feature>
<accession>B4QGZ1</accession>
<proteinExistence type="inferred from homology"/>
<gene>
    <name type="primary">tun</name>
    <name type="ORF">GD11140</name>
</gene>
<sequence length="205" mass="23974">MTTDFLFPKIADCSYVSCYCEENVWKLCEQVKRTRPEELSKCYAVFVSNEGRTVPLWRQKAGRGDDQVVIWDYHVFFIHNPLLNRCLVFDLDTTLPFPTYFHKYVTETFRSDLALRPEHHRFFRVIPADTYLIEFSSDRRHMRRPDGSWIKPPPSYPPILSNSNMHCLGDFICMSAGKGPGAVYSLSEFVQNFYKSPHVMAQNNK</sequence>
<keyword id="KW-0378">Hydrolase</keyword>
<keyword id="KW-1185">Reference proteome</keyword>
<dbReference type="EC" id="3.5.1.122" evidence="2"/>
<dbReference type="EMBL" id="CM000362">
    <property type="protein sequence ID" value="EDX07254.1"/>
    <property type="molecule type" value="Genomic_DNA"/>
</dbReference>
<dbReference type="SMR" id="B4QGZ1"/>
<dbReference type="STRING" id="7240.B4QGZ1"/>
<dbReference type="EnsemblMetazoa" id="FBtr0211050">
    <property type="protein sequence ID" value="FBpp0209542"/>
    <property type="gene ID" value="FBgn0182895"/>
</dbReference>
<dbReference type="EnsemblMetazoa" id="XM_002081633.4">
    <property type="protein sequence ID" value="XP_002081669.1"/>
    <property type="gene ID" value="LOC6734662"/>
</dbReference>
<dbReference type="GeneID" id="6734662"/>
<dbReference type="CTD" id="36743"/>
<dbReference type="HOGENOM" id="CLU_091083_1_0_1"/>
<dbReference type="OMA" id="GWGTVYS"/>
<dbReference type="OrthoDB" id="191192at2759"/>
<dbReference type="PhylomeDB" id="B4QGZ1"/>
<dbReference type="ChiTaRS" id="Zasp52">
    <property type="organism name" value="fly"/>
</dbReference>
<dbReference type="Proteomes" id="UP000000304">
    <property type="component" value="Chromosome 2R"/>
</dbReference>
<dbReference type="Bgee" id="FBgn0182895">
    <property type="expression patterns" value="Expressed in female reproductive system and 3 other cell types or tissues"/>
</dbReference>
<dbReference type="GO" id="GO:0005829">
    <property type="term" value="C:cytosol"/>
    <property type="evidence" value="ECO:0007669"/>
    <property type="project" value="TreeGrafter"/>
</dbReference>
<dbReference type="GO" id="GO:0005634">
    <property type="term" value="C:nucleus"/>
    <property type="evidence" value="ECO:0007669"/>
    <property type="project" value="TreeGrafter"/>
</dbReference>
<dbReference type="GO" id="GO:0008418">
    <property type="term" value="F:protein-N-terminal asparagine amidohydrolase activity"/>
    <property type="evidence" value="ECO:0007669"/>
    <property type="project" value="InterPro"/>
</dbReference>
<dbReference type="GO" id="GO:0070773">
    <property type="term" value="F:protein-N-terminal glutamine amidohydrolase activity"/>
    <property type="evidence" value="ECO:0007669"/>
    <property type="project" value="UniProtKB-EC"/>
</dbReference>
<dbReference type="FunFam" id="3.10.620.10:FF:000001">
    <property type="entry name" value="Blast:Protein N-terminal glutamine amidohydrolase"/>
    <property type="match status" value="1"/>
</dbReference>
<dbReference type="Gene3D" id="3.10.620.10">
    <property type="entry name" value="Protein N-terminal glutamine amidohydrolase, alpha beta roll"/>
    <property type="match status" value="1"/>
</dbReference>
<dbReference type="InterPro" id="IPR037132">
    <property type="entry name" value="N_Gln_amidohydro_ab_roll_sf"/>
</dbReference>
<dbReference type="InterPro" id="IPR039733">
    <property type="entry name" value="NTAQ1"/>
</dbReference>
<dbReference type="InterPro" id="IPR023128">
    <property type="entry name" value="Prot_N_Gln_amidohydro_ab_roll"/>
</dbReference>
<dbReference type="PANTHER" id="PTHR13035">
    <property type="entry name" value="PROTEIN N-TERMINAL GLUTAMINE AMIDOHYDROLASE"/>
    <property type="match status" value="1"/>
</dbReference>
<dbReference type="PANTHER" id="PTHR13035:SF0">
    <property type="entry name" value="PROTEIN N-TERMINAL GLUTAMINE AMIDOHYDROLASE"/>
    <property type="match status" value="1"/>
</dbReference>
<dbReference type="Pfam" id="PF09764">
    <property type="entry name" value="Nt_Gln_amidase"/>
    <property type="match status" value="1"/>
</dbReference>
<comment type="function">
    <text evidence="2">Mediates the side-chain deamidation of N-terminal glutamine residues to glutamate, an important step in N-end rule pathway of protein degradation. Conversion of the resulting N-terminal glutamine to glutamate renders the protein susceptible to arginylation, polyubiquitination and degradation as specified by the N-end rule. Does not act on substrates with internal or C-terminal glutamine and does not act on non-glutamine residues in any position.</text>
</comment>
<comment type="catalytic activity">
    <reaction evidence="2">
        <text>N-terminal L-glutaminyl-[protein] + H2O = N-terminal L-glutamyl-[protein] + NH4(+)</text>
        <dbReference type="Rhea" id="RHEA:50680"/>
        <dbReference type="Rhea" id="RHEA-COMP:12668"/>
        <dbReference type="Rhea" id="RHEA-COMP:12777"/>
        <dbReference type="ChEBI" id="CHEBI:15377"/>
        <dbReference type="ChEBI" id="CHEBI:28938"/>
        <dbReference type="ChEBI" id="CHEBI:64721"/>
        <dbReference type="ChEBI" id="CHEBI:64722"/>
        <dbReference type="EC" id="3.5.1.122"/>
    </reaction>
</comment>
<comment type="subunit">
    <text evidence="3">Monomer.</text>
</comment>
<comment type="similarity">
    <text evidence="4">Belongs to the NTAQ1 family.</text>
</comment>
<reference key="1">
    <citation type="journal article" date="2007" name="Nature">
        <title>Evolution of genes and genomes on the Drosophila phylogeny.</title>
        <authorList>
            <consortium name="Drosophila 12 genomes consortium"/>
        </authorList>
    </citation>
    <scope>NUCLEOTIDE SEQUENCE [LARGE SCALE GENOMIC DNA]</scope>
</reference>
<organism>
    <name type="scientific">Drosophila simulans</name>
    <name type="common">Fruit fly</name>
    <dbReference type="NCBI Taxonomy" id="7240"/>
    <lineage>
        <taxon>Eukaryota</taxon>
        <taxon>Metazoa</taxon>
        <taxon>Ecdysozoa</taxon>
        <taxon>Arthropoda</taxon>
        <taxon>Hexapoda</taxon>
        <taxon>Insecta</taxon>
        <taxon>Pterygota</taxon>
        <taxon>Neoptera</taxon>
        <taxon>Endopterygota</taxon>
        <taxon>Diptera</taxon>
        <taxon>Brachycera</taxon>
        <taxon>Muscomorpha</taxon>
        <taxon>Ephydroidea</taxon>
        <taxon>Drosophilidae</taxon>
        <taxon>Drosophila</taxon>
        <taxon>Sophophora</taxon>
    </lineage>
</organism>
<name>NTAQ1_DROSI</name>
<protein>
    <recommendedName>
        <fullName>Protein N-terminal glutamine amidohydrolase</fullName>
        <ecNumber evidence="2">3.5.1.122</ecNumber>
    </recommendedName>
    <alternativeName>
        <fullName>Protein NH2-terminal glutamine deamidase</fullName>
        <shortName>N-terminal Gln amidase</shortName>
        <shortName>Nt(Q)-amidase</shortName>
    </alternativeName>
    <alternativeName>
        <fullName>Protein tungus</fullName>
    </alternativeName>
</protein>
<evidence type="ECO:0000250" key="1"/>
<evidence type="ECO:0000250" key="2">
    <source>
        <dbReference type="UniProtKB" id="Q80WB5"/>
    </source>
</evidence>
<evidence type="ECO:0000250" key="3">
    <source>
        <dbReference type="UniProtKB" id="Q96HA8"/>
    </source>
</evidence>
<evidence type="ECO:0000305" key="4"/>